<comment type="function">
    <text evidence="1">Associates with the EF-Tu.GDP complex and induces the exchange of GDP to GTP. It remains bound to the aminoacyl-tRNA.EF-Tu.GTP complex up to the GTP hydrolysis stage on the ribosome.</text>
</comment>
<comment type="subcellular location">
    <subcellularLocation>
        <location evidence="1">Mitochondrion</location>
    </subcellularLocation>
</comment>
<comment type="miscellaneous">
    <text evidence="1">This protein may be expected to contain an N-terminal transit peptide but none has been predicted.</text>
</comment>
<comment type="similarity">
    <text evidence="1">Belongs to the EF-Ts family.</text>
</comment>
<gene>
    <name type="primary">tsfm</name>
</gene>
<reference key="1">
    <citation type="submission" date="2006-12" db="EMBL/GenBank/DDBJ databases">
        <authorList>
            <consortium name="NIH - Xenopus Gene Collection (XGC) project"/>
        </authorList>
    </citation>
    <scope>NUCLEOTIDE SEQUENCE [LARGE SCALE MRNA]</scope>
    <source>
        <tissue>Forelimb</tissue>
        <tissue>Hind limb</tissue>
    </source>
</reference>
<feature type="chain" id="PRO_0000402314" description="Elongation factor Ts, mitochondrial">
    <location>
        <begin position="1"/>
        <end position="312"/>
    </location>
</feature>
<name>EFTS_XENLA</name>
<proteinExistence type="evidence at transcript level"/>
<evidence type="ECO:0000255" key="1">
    <source>
        <dbReference type="HAMAP-Rule" id="MF_03135"/>
    </source>
</evidence>
<sequence>MAALCNNLRAKLVSWQPVGLFHTGVRLLAADKDLLVKLRKKTGYSFMNCKKALEQCANDFKQAETWLHQQAQKEGWDKASKLQGRKTKEGLVGLLQDGSTSVMVEVNCETDFVARNSKFQQLVQQVAVSTLRHCQSHPENTSSYVKGFLCGDELLQLKADESLKDQLALAIGKLGENMIMKRAAWVKTPSDIFVGSYMHGILMADLPSLTNMTFGKYGALVICKDSDGNLKSNISEIGRRLGQHVVGMNPLLVGSLEDESGGETETKMLAQPFLLEPSLTVGQYLQPRGINVLDFIRFECGEEAESTESTPT</sequence>
<organism>
    <name type="scientific">Xenopus laevis</name>
    <name type="common">African clawed frog</name>
    <dbReference type="NCBI Taxonomy" id="8355"/>
    <lineage>
        <taxon>Eukaryota</taxon>
        <taxon>Metazoa</taxon>
        <taxon>Chordata</taxon>
        <taxon>Craniata</taxon>
        <taxon>Vertebrata</taxon>
        <taxon>Euteleostomi</taxon>
        <taxon>Amphibia</taxon>
        <taxon>Batrachia</taxon>
        <taxon>Anura</taxon>
        <taxon>Pipoidea</taxon>
        <taxon>Pipidae</taxon>
        <taxon>Xenopodinae</taxon>
        <taxon>Xenopus</taxon>
        <taxon>Xenopus</taxon>
    </lineage>
</organism>
<protein>
    <recommendedName>
        <fullName evidence="1">Elongation factor Ts, mitochondrial</fullName>
        <shortName evidence="1">EF-Ts</shortName>
        <shortName evidence="1">EF-TsMt</shortName>
    </recommendedName>
</protein>
<accession>A1L2P7</accession>
<keyword id="KW-0251">Elongation factor</keyword>
<keyword id="KW-0496">Mitochondrion</keyword>
<keyword id="KW-0648">Protein biosynthesis</keyword>
<keyword id="KW-1185">Reference proteome</keyword>
<dbReference type="EMBL" id="BC129644">
    <property type="protein sequence ID" value="AAI29645.1"/>
    <property type="molecule type" value="mRNA"/>
</dbReference>
<dbReference type="RefSeq" id="NP_001091158.1">
    <property type="nucleotide sequence ID" value="NM_001097689.1"/>
</dbReference>
<dbReference type="SMR" id="A1L2P7"/>
<dbReference type="GeneID" id="100036913"/>
<dbReference type="KEGG" id="xla:100036913"/>
<dbReference type="AGR" id="Xenbase:XB-GENE-6255870"/>
<dbReference type="CTD" id="100036913"/>
<dbReference type="Xenbase" id="XB-GENE-6255870">
    <property type="gene designation" value="tsfm.L"/>
</dbReference>
<dbReference type="OrthoDB" id="277235at2759"/>
<dbReference type="Proteomes" id="UP000186698">
    <property type="component" value="Chromosome 2L"/>
</dbReference>
<dbReference type="Bgee" id="100036913">
    <property type="expression patterns" value="Expressed in oocyte and 20 other cell types or tissues"/>
</dbReference>
<dbReference type="GO" id="GO:0005739">
    <property type="term" value="C:mitochondrion"/>
    <property type="evidence" value="ECO:0007669"/>
    <property type="project" value="UniProtKB-SubCell"/>
</dbReference>
<dbReference type="GO" id="GO:0003746">
    <property type="term" value="F:translation elongation factor activity"/>
    <property type="evidence" value="ECO:0000318"/>
    <property type="project" value="GO_Central"/>
</dbReference>
<dbReference type="GO" id="GO:0070125">
    <property type="term" value="P:mitochondrial translational elongation"/>
    <property type="evidence" value="ECO:0000318"/>
    <property type="project" value="GO_Central"/>
</dbReference>
<dbReference type="CDD" id="cd14275">
    <property type="entry name" value="UBA_EF-Ts"/>
    <property type="match status" value="1"/>
</dbReference>
<dbReference type="FunFam" id="1.10.8.10:FF:000031">
    <property type="entry name" value="Elongation factor Ts, mitochondrial"/>
    <property type="match status" value="1"/>
</dbReference>
<dbReference type="FunFam" id="3.30.479.20:FF:000007">
    <property type="entry name" value="Elongation factor Ts, mitochondrial"/>
    <property type="match status" value="1"/>
</dbReference>
<dbReference type="FunFam" id="3.30.479.20:FF:000008">
    <property type="entry name" value="Elongation factor Ts, mitochondrial"/>
    <property type="match status" value="1"/>
</dbReference>
<dbReference type="Gene3D" id="1.10.8.10">
    <property type="entry name" value="DNA helicase RuvA subunit, C-terminal domain"/>
    <property type="match status" value="1"/>
</dbReference>
<dbReference type="Gene3D" id="3.30.479.20">
    <property type="entry name" value="Elongation factor Ts, dimerisation domain"/>
    <property type="match status" value="2"/>
</dbReference>
<dbReference type="HAMAP" id="MF_00050">
    <property type="entry name" value="EF_Ts"/>
    <property type="match status" value="1"/>
</dbReference>
<dbReference type="InterPro" id="IPR036402">
    <property type="entry name" value="EF-Ts_dimer_sf"/>
</dbReference>
<dbReference type="InterPro" id="IPR001816">
    <property type="entry name" value="Transl_elong_EFTs/EF1B"/>
</dbReference>
<dbReference type="InterPro" id="IPR014039">
    <property type="entry name" value="Transl_elong_EFTs/EF1B_dimer"/>
</dbReference>
<dbReference type="InterPro" id="IPR018101">
    <property type="entry name" value="Transl_elong_Ts_CS"/>
</dbReference>
<dbReference type="InterPro" id="IPR009060">
    <property type="entry name" value="UBA-like_sf"/>
</dbReference>
<dbReference type="NCBIfam" id="TIGR00116">
    <property type="entry name" value="tsf"/>
    <property type="match status" value="1"/>
</dbReference>
<dbReference type="PANTHER" id="PTHR11741">
    <property type="entry name" value="ELONGATION FACTOR TS"/>
    <property type="match status" value="1"/>
</dbReference>
<dbReference type="PANTHER" id="PTHR11741:SF0">
    <property type="entry name" value="ELONGATION FACTOR TS, MITOCHONDRIAL"/>
    <property type="match status" value="1"/>
</dbReference>
<dbReference type="Pfam" id="PF25025">
    <property type="entry name" value="EF-Ts_N"/>
    <property type="match status" value="1"/>
</dbReference>
<dbReference type="Pfam" id="PF00889">
    <property type="entry name" value="EF_TS"/>
    <property type="match status" value="1"/>
</dbReference>
<dbReference type="SUPFAM" id="SSF54713">
    <property type="entry name" value="Elongation factor Ts (EF-Ts), dimerisation domain"/>
    <property type="match status" value="2"/>
</dbReference>
<dbReference type="SUPFAM" id="SSF46934">
    <property type="entry name" value="UBA-like"/>
    <property type="match status" value="1"/>
</dbReference>
<dbReference type="PROSITE" id="PS01126">
    <property type="entry name" value="EF_TS_1"/>
    <property type="match status" value="1"/>
</dbReference>
<dbReference type="PROSITE" id="PS01127">
    <property type="entry name" value="EF_TS_2"/>
    <property type="match status" value="1"/>
</dbReference>